<dbReference type="EMBL" id="CP001191">
    <property type="protein sequence ID" value="ACI53382.1"/>
    <property type="molecule type" value="Genomic_DNA"/>
</dbReference>
<dbReference type="SMR" id="B5ZN41"/>
<dbReference type="STRING" id="395492.Rleg2_0079"/>
<dbReference type="KEGG" id="rlt:Rleg2_0079"/>
<dbReference type="eggNOG" id="COG0218">
    <property type="taxonomic scope" value="Bacteria"/>
</dbReference>
<dbReference type="HOGENOM" id="CLU_033732_2_0_5"/>
<dbReference type="Proteomes" id="UP000008330">
    <property type="component" value="Chromosome"/>
</dbReference>
<dbReference type="GO" id="GO:0005829">
    <property type="term" value="C:cytosol"/>
    <property type="evidence" value="ECO:0007669"/>
    <property type="project" value="TreeGrafter"/>
</dbReference>
<dbReference type="GO" id="GO:0005525">
    <property type="term" value="F:GTP binding"/>
    <property type="evidence" value="ECO:0007669"/>
    <property type="project" value="UniProtKB-UniRule"/>
</dbReference>
<dbReference type="GO" id="GO:0046872">
    <property type="term" value="F:metal ion binding"/>
    <property type="evidence" value="ECO:0007669"/>
    <property type="project" value="UniProtKB-KW"/>
</dbReference>
<dbReference type="GO" id="GO:0000917">
    <property type="term" value="P:division septum assembly"/>
    <property type="evidence" value="ECO:0007669"/>
    <property type="project" value="UniProtKB-KW"/>
</dbReference>
<dbReference type="CDD" id="cd01876">
    <property type="entry name" value="YihA_EngB"/>
    <property type="match status" value="1"/>
</dbReference>
<dbReference type="Gene3D" id="3.40.50.300">
    <property type="entry name" value="P-loop containing nucleotide triphosphate hydrolases"/>
    <property type="match status" value="1"/>
</dbReference>
<dbReference type="HAMAP" id="MF_00321">
    <property type="entry name" value="GTPase_EngB"/>
    <property type="match status" value="1"/>
</dbReference>
<dbReference type="InterPro" id="IPR030393">
    <property type="entry name" value="G_ENGB_dom"/>
</dbReference>
<dbReference type="InterPro" id="IPR006073">
    <property type="entry name" value="GTP-bd"/>
</dbReference>
<dbReference type="InterPro" id="IPR019987">
    <property type="entry name" value="GTP-bd_ribosome_bio_YsxC"/>
</dbReference>
<dbReference type="InterPro" id="IPR027417">
    <property type="entry name" value="P-loop_NTPase"/>
</dbReference>
<dbReference type="NCBIfam" id="TIGR03598">
    <property type="entry name" value="GTPase_YsxC"/>
    <property type="match status" value="1"/>
</dbReference>
<dbReference type="PANTHER" id="PTHR11649:SF13">
    <property type="entry name" value="ENGB-TYPE G DOMAIN-CONTAINING PROTEIN"/>
    <property type="match status" value="1"/>
</dbReference>
<dbReference type="PANTHER" id="PTHR11649">
    <property type="entry name" value="MSS1/TRME-RELATED GTP-BINDING PROTEIN"/>
    <property type="match status" value="1"/>
</dbReference>
<dbReference type="Pfam" id="PF01926">
    <property type="entry name" value="MMR_HSR1"/>
    <property type="match status" value="1"/>
</dbReference>
<dbReference type="SUPFAM" id="SSF52540">
    <property type="entry name" value="P-loop containing nucleoside triphosphate hydrolases"/>
    <property type="match status" value="1"/>
</dbReference>
<dbReference type="PROSITE" id="PS51706">
    <property type="entry name" value="G_ENGB"/>
    <property type="match status" value="1"/>
</dbReference>
<keyword id="KW-0131">Cell cycle</keyword>
<keyword id="KW-0132">Cell division</keyword>
<keyword id="KW-0342">GTP-binding</keyword>
<keyword id="KW-0460">Magnesium</keyword>
<keyword id="KW-0479">Metal-binding</keyword>
<keyword id="KW-0547">Nucleotide-binding</keyword>
<keyword id="KW-1185">Reference proteome</keyword>
<keyword id="KW-0717">Septation</keyword>
<accession>B5ZN41</accession>
<evidence type="ECO:0000255" key="1">
    <source>
        <dbReference type="HAMAP-Rule" id="MF_00321"/>
    </source>
</evidence>
<sequence>MPETEKPLFGHPWIFIRGVPSLNFLPPEGPLEVAFAGRSNVGKSSLINALVGQKGLARTSNTPGRTQELNYFVPDGYSGESGDMPPMAIVDMPGYGYAQAPKEQVDKWTKLVFDYLRGRATLKRVYVLIDSRHGIKKNDDDVLDLLDKAAVSYQIVLTKTDKIKAPAVPKLLAETAEKIRKRPAAYPGVLSTSSEKGDGLDDLRQAIGETVGVARWK</sequence>
<gene>
    <name evidence="1" type="primary">engB</name>
    <name type="ordered locus">Rleg2_0079</name>
</gene>
<feature type="chain" id="PRO_1000115998" description="Probable GTP-binding protein EngB">
    <location>
        <begin position="1"/>
        <end position="217"/>
    </location>
</feature>
<feature type="domain" description="EngB-type G" evidence="1">
    <location>
        <begin position="29"/>
        <end position="213"/>
    </location>
</feature>
<feature type="binding site" evidence="1">
    <location>
        <begin position="37"/>
        <end position="44"/>
    </location>
    <ligand>
        <name>GTP</name>
        <dbReference type="ChEBI" id="CHEBI:37565"/>
    </ligand>
</feature>
<feature type="binding site" evidence="1">
    <location>
        <position position="44"/>
    </location>
    <ligand>
        <name>Mg(2+)</name>
        <dbReference type="ChEBI" id="CHEBI:18420"/>
    </ligand>
</feature>
<feature type="binding site" evidence="1">
    <location>
        <begin position="64"/>
        <end position="68"/>
    </location>
    <ligand>
        <name>GTP</name>
        <dbReference type="ChEBI" id="CHEBI:37565"/>
    </ligand>
</feature>
<feature type="binding site" evidence="1">
    <location>
        <position position="66"/>
    </location>
    <ligand>
        <name>Mg(2+)</name>
        <dbReference type="ChEBI" id="CHEBI:18420"/>
    </ligand>
</feature>
<feature type="binding site" evidence="1">
    <location>
        <begin position="91"/>
        <end position="94"/>
    </location>
    <ligand>
        <name>GTP</name>
        <dbReference type="ChEBI" id="CHEBI:37565"/>
    </ligand>
</feature>
<feature type="binding site" evidence="1">
    <location>
        <begin position="158"/>
        <end position="161"/>
    </location>
    <ligand>
        <name>GTP</name>
        <dbReference type="ChEBI" id="CHEBI:37565"/>
    </ligand>
</feature>
<feature type="binding site" evidence="1">
    <location>
        <begin position="192"/>
        <end position="194"/>
    </location>
    <ligand>
        <name>GTP</name>
        <dbReference type="ChEBI" id="CHEBI:37565"/>
    </ligand>
</feature>
<organism>
    <name type="scientific">Rhizobium leguminosarum bv. trifolii (strain WSM2304)</name>
    <dbReference type="NCBI Taxonomy" id="395492"/>
    <lineage>
        <taxon>Bacteria</taxon>
        <taxon>Pseudomonadati</taxon>
        <taxon>Pseudomonadota</taxon>
        <taxon>Alphaproteobacteria</taxon>
        <taxon>Hyphomicrobiales</taxon>
        <taxon>Rhizobiaceae</taxon>
        <taxon>Rhizobium/Agrobacterium group</taxon>
        <taxon>Rhizobium</taxon>
    </lineage>
</organism>
<comment type="function">
    <text evidence="1">Necessary for normal cell division and for the maintenance of normal septation.</text>
</comment>
<comment type="cofactor">
    <cofactor evidence="1">
        <name>Mg(2+)</name>
        <dbReference type="ChEBI" id="CHEBI:18420"/>
    </cofactor>
</comment>
<comment type="similarity">
    <text evidence="1">Belongs to the TRAFAC class TrmE-Era-EngA-EngB-Septin-like GTPase superfamily. EngB GTPase family.</text>
</comment>
<proteinExistence type="inferred from homology"/>
<protein>
    <recommendedName>
        <fullName evidence="1">Probable GTP-binding protein EngB</fullName>
    </recommendedName>
</protein>
<reference key="1">
    <citation type="journal article" date="2010" name="Stand. Genomic Sci.">
        <title>Complete genome sequence of Rhizobium leguminosarum bv trifolii strain WSM2304, an effective microsymbiont of the South American clover Trifolium polymorphum.</title>
        <authorList>
            <person name="Reeve W."/>
            <person name="O'Hara G."/>
            <person name="Chain P."/>
            <person name="Ardley J."/>
            <person name="Brau L."/>
            <person name="Nandesena K."/>
            <person name="Tiwari R."/>
            <person name="Malfatti S."/>
            <person name="Kiss H."/>
            <person name="Lapidus A."/>
            <person name="Copeland A."/>
            <person name="Nolan M."/>
            <person name="Land M."/>
            <person name="Ivanova N."/>
            <person name="Mavromatis K."/>
            <person name="Markowitz V."/>
            <person name="Kyrpides N."/>
            <person name="Melino V."/>
            <person name="Denton M."/>
            <person name="Yates R."/>
            <person name="Howieson J."/>
        </authorList>
    </citation>
    <scope>NUCLEOTIDE SEQUENCE [LARGE SCALE GENOMIC DNA]</scope>
    <source>
        <strain>WSM2304</strain>
    </source>
</reference>
<name>ENGB_RHILW</name>